<accession>I3SL57</accession>
<dbReference type="EC" id="1.14.14.18" evidence="4"/>
<dbReference type="EMBL" id="BT141205">
    <property type="protein sequence ID" value="AFK40999.1"/>
    <property type="molecule type" value="mRNA"/>
</dbReference>
<dbReference type="SMR" id="I3SL57"/>
<dbReference type="GO" id="GO:0009507">
    <property type="term" value="C:chloroplast"/>
    <property type="evidence" value="ECO:0007669"/>
    <property type="project" value="UniProtKB-SubCell"/>
</dbReference>
<dbReference type="GO" id="GO:0009536">
    <property type="term" value="C:plastid"/>
    <property type="evidence" value="ECO:0000314"/>
    <property type="project" value="UniProtKB"/>
</dbReference>
<dbReference type="GO" id="GO:0004392">
    <property type="term" value="F:heme oxygenase (decyclizing) activity"/>
    <property type="evidence" value="ECO:0000314"/>
    <property type="project" value="UniProtKB"/>
</dbReference>
<dbReference type="GO" id="GO:0046872">
    <property type="term" value="F:metal ion binding"/>
    <property type="evidence" value="ECO:0007669"/>
    <property type="project" value="UniProtKB-KW"/>
</dbReference>
<dbReference type="GO" id="GO:0051702">
    <property type="term" value="P:biological process involved in interaction with symbiont"/>
    <property type="evidence" value="ECO:0000315"/>
    <property type="project" value="UniProtKB"/>
</dbReference>
<dbReference type="GO" id="GO:0042167">
    <property type="term" value="P:heme catabolic process"/>
    <property type="evidence" value="ECO:0000315"/>
    <property type="project" value="UniProtKB"/>
</dbReference>
<dbReference type="GO" id="GO:0006788">
    <property type="term" value="P:heme oxidation"/>
    <property type="evidence" value="ECO:0000315"/>
    <property type="project" value="UniProtKB"/>
</dbReference>
<dbReference type="GO" id="GO:0009877">
    <property type="term" value="P:nodulation"/>
    <property type="evidence" value="ECO:0000315"/>
    <property type="project" value="UniProtKB"/>
</dbReference>
<dbReference type="GO" id="GO:0015979">
    <property type="term" value="P:photosynthesis"/>
    <property type="evidence" value="ECO:0007669"/>
    <property type="project" value="UniProtKB-KW"/>
</dbReference>
<dbReference type="GO" id="GO:0010024">
    <property type="term" value="P:phytochromobilin biosynthetic process"/>
    <property type="evidence" value="ECO:0007669"/>
    <property type="project" value="TreeGrafter"/>
</dbReference>
<dbReference type="GO" id="GO:0009646">
    <property type="term" value="P:response to absence of light"/>
    <property type="evidence" value="ECO:0000315"/>
    <property type="project" value="UniProtKB"/>
</dbReference>
<dbReference type="GO" id="GO:0010167">
    <property type="term" value="P:response to nitrate"/>
    <property type="evidence" value="ECO:0000315"/>
    <property type="project" value="UniProtKB"/>
</dbReference>
<dbReference type="GO" id="GO:0009609">
    <property type="term" value="P:response to symbiotic bacterium"/>
    <property type="evidence" value="ECO:0000270"/>
    <property type="project" value="UniProtKB"/>
</dbReference>
<dbReference type="CDD" id="cd19165">
    <property type="entry name" value="HemeO"/>
    <property type="match status" value="1"/>
</dbReference>
<dbReference type="FunFam" id="1.20.910.10:FF:000005">
    <property type="entry name" value="Heme oxygenase 1"/>
    <property type="match status" value="1"/>
</dbReference>
<dbReference type="Gene3D" id="1.20.910.10">
    <property type="entry name" value="Heme oxygenase-like"/>
    <property type="match status" value="1"/>
</dbReference>
<dbReference type="InterPro" id="IPR002051">
    <property type="entry name" value="Haem_Oase"/>
</dbReference>
<dbReference type="InterPro" id="IPR016053">
    <property type="entry name" value="Haem_Oase-like"/>
</dbReference>
<dbReference type="InterPro" id="IPR016084">
    <property type="entry name" value="Haem_Oase-like_multi-hlx"/>
</dbReference>
<dbReference type="InterPro" id="IPR016951">
    <property type="entry name" value="Haem_Oase_decyc_pln"/>
</dbReference>
<dbReference type="PANTHER" id="PTHR35703">
    <property type="entry name" value="HEME OXYGENASE 1, CHLOROPLASTIC-RELATED"/>
    <property type="match status" value="1"/>
</dbReference>
<dbReference type="PANTHER" id="PTHR35703:SF2">
    <property type="entry name" value="HEME OXYGENASE 1, CHLOROPLASTIC-RELATED"/>
    <property type="match status" value="1"/>
</dbReference>
<dbReference type="Pfam" id="PF01126">
    <property type="entry name" value="Heme_oxygenase"/>
    <property type="match status" value="1"/>
</dbReference>
<dbReference type="PIRSF" id="PIRSF030219">
    <property type="entry name" value="Heme_Oase_decyc_pln"/>
    <property type="match status" value="1"/>
</dbReference>
<dbReference type="SUPFAM" id="SSF48613">
    <property type="entry name" value="Heme oxygenase-like"/>
    <property type="match status" value="1"/>
</dbReference>
<evidence type="ECO:0000250" key="1">
    <source>
        <dbReference type="UniProtKB" id="G3XCZ8"/>
    </source>
</evidence>
<evidence type="ECO:0000250" key="2">
    <source>
        <dbReference type="UniProtKB" id="O48782"/>
    </source>
</evidence>
<evidence type="ECO:0000255" key="3"/>
<evidence type="ECO:0000269" key="4">
    <source>
    </source>
</evidence>
<evidence type="ECO:0000303" key="5">
    <source>
    </source>
</evidence>
<evidence type="ECO:0000305" key="6"/>
<reference key="1">
    <citation type="submission" date="2012-05" db="EMBL/GenBank/DDBJ databases">
        <authorList>
            <person name="Krishnakumar V."/>
            <person name="Cheung F."/>
            <person name="Xiao Y."/>
            <person name="Chan A."/>
            <person name="Moskal W.A."/>
            <person name="Town C.D."/>
        </authorList>
    </citation>
    <scope>NUCLEOTIDE SEQUENCE [MRNA]</scope>
</reference>
<reference key="2">
    <citation type="journal article" date="2023" name="New Phytol.">
        <title>Heme catabolism mediated by heme oxygenase in uninfected interstitial cells enables efficient symbiotic nitrogen fixation in Lotus japonicus nodules.</title>
        <authorList>
            <person name="Zhou Y."/>
            <person name="Wang L."/>
            <person name="Rubio M.C."/>
            <person name="Perez-Rontome C."/>
            <person name="Zhou Y."/>
            <person name="Qi Y."/>
            <person name="Tian T."/>
            <person name="Zhang W."/>
            <person name="Fan Q."/>
            <person name="Becana M."/>
            <person name="Duanmu D."/>
        </authorList>
    </citation>
    <scope>FUNCTION</scope>
    <scope>DISRUPTION PHENOTYPE</scope>
    <scope>CATALYTIC ACTIVITY</scope>
    <scope>SUBCELLULAR LOCATION</scope>
    <scope>TISSUE SPECIFICITY</scope>
    <scope>DEVELOPMENTAL STAGE</scope>
    <scope>INDUCTION BY MESORHIZOBIUM LOTI</scope>
    <source>
        <strain>cv. Gifu B-129</strain>
        <strain>cv. MG-20</strain>
    </source>
</reference>
<name>HO1_LOTJA</name>
<comment type="function">
    <text evidence="2 4">Key enzyme in the synthesis of the chromophore of the phytochrome family of plant photoreceptors (By similarity). Catalyzes the opening of the heme ring to form the open-chain tetrapyrrole biliverdin IX with the release of iron and carbon monoxide (CO) (PubMed:37329247). Produces specifically the biliverdin IX-alpha isomer (By similarity). Can form complex with heme, is ferredoxin-dependent and its activity is increased in the presence of ascorbate (By similarity). May affect the plastid-to-nucleus signaling pathway by perturbing tetrapyrrole synthesis (By similarity). The plastid-to-nucleus signal plays an important role in the coordinated expression of both nuclear- and chloroplast-localized genes that encode photosynthesis-related proteins (By similarity). Required for efficient symbiotic nitrogen fixation (SNF) in root nodules (PubMed:37329247). Responsible for heme catabolism in uninfected nodule interstitial cells (UC), preventing superoxide production under stressful conditions (e.g. nitrate exposure and darkness) and catalyzing biliverdin (BV) production in senescing green nodules (PubMed:37329247).</text>
</comment>
<comment type="catalytic activity">
    <reaction evidence="4">
        <text>heme b + 3 reduced [NADPH--hemoprotein reductase] + 3 O2 = biliverdin IXalpha + CO + Fe(2+) + 3 oxidized [NADPH--hemoprotein reductase] + 3 H2O + H(+)</text>
        <dbReference type="Rhea" id="RHEA:21764"/>
        <dbReference type="Rhea" id="RHEA-COMP:11964"/>
        <dbReference type="Rhea" id="RHEA-COMP:11965"/>
        <dbReference type="ChEBI" id="CHEBI:15377"/>
        <dbReference type="ChEBI" id="CHEBI:15378"/>
        <dbReference type="ChEBI" id="CHEBI:15379"/>
        <dbReference type="ChEBI" id="CHEBI:17245"/>
        <dbReference type="ChEBI" id="CHEBI:29033"/>
        <dbReference type="ChEBI" id="CHEBI:57618"/>
        <dbReference type="ChEBI" id="CHEBI:57991"/>
        <dbReference type="ChEBI" id="CHEBI:58210"/>
        <dbReference type="ChEBI" id="CHEBI:60344"/>
        <dbReference type="EC" id="1.14.14.18"/>
    </reaction>
    <physiologicalReaction direction="left-to-right" evidence="4">
        <dbReference type="Rhea" id="RHEA:21765"/>
    </physiologicalReaction>
</comment>
<comment type="subcellular location">
    <subcellularLocation>
        <location evidence="3">Plastid</location>
        <location evidence="3">Chloroplast</location>
    </subcellularLocation>
    <subcellularLocation>
        <location evidence="4">Plastid</location>
    </subcellularLocation>
    <text evidence="4">Localized to the plastids of uninfected interstitial cells (UC) within root nodules, but absent from infected cells (IC) plastids.</text>
</comment>
<comment type="tissue specificity">
    <text evidence="4">Highly expressed in root nodules and, to a lower extent, in leaves, shoots, roots, flowers and pods (at protein level).</text>
</comment>
<comment type="developmental stage">
    <text evidence="4">In nodulating roots, accumulates during nodule maturation, and is further enhanced in aging and senescent nodules, always restricted to uninfected interstitial cells (UC) (at protein level).</text>
</comment>
<comment type="induction">
    <text evidence="4">Accumulates in developing root nodules upon inoculation with the symbiotic Mesorhizobium loti strain MAFF303099.</text>
</comment>
<comment type="disruption phenotype">
    <text evidence="4">Reduced symbiotic nitrogen fixation (SNF) in root nodules associated with an increased superoxide production, and development of brown, rather than green, nodules during senescence due to the accumulation of hemes and melanin-like pigments instead of biliverdin (BV) in the periphery of the nitrogen-fixing zone.</text>
</comment>
<comment type="similarity">
    <text evidence="6">Belongs to the heme oxygenase family.</text>
</comment>
<organism>
    <name type="scientific">Lotus japonicus</name>
    <name type="common">Lotus corniculatus var. japonicus</name>
    <dbReference type="NCBI Taxonomy" id="34305"/>
    <lineage>
        <taxon>Eukaryota</taxon>
        <taxon>Viridiplantae</taxon>
        <taxon>Streptophyta</taxon>
        <taxon>Embryophyta</taxon>
        <taxon>Tracheophyta</taxon>
        <taxon>Spermatophyta</taxon>
        <taxon>Magnoliopsida</taxon>
        <taxon>eudicotyledons</taxon>
        <taxon>Gunneridae</taxon>
        <taxon>Pentapetalae</taxon>
        <taxon>rosids</taxon>
        <taxon>fabids</taxon>
        <taxon>Fabales</taxon>
        <taxon>Fabaceae</taxon>
        <taxon>Papilionoideae</taxon>
        <taxon>50 kb inversion clade</taxon>
        <taxon>NPAAA clade</taxon>
        <taxon>Hologalegina</taxon>
        <taxon>robinioid clade</taxon>
        <taxon>Loteae</taxon>
        <taxon>Lotus</taxon>
    </lineage>
</organism>
<sequence length="282" mass="32549">MASATVVSQIQSLYIIKPRLSPPPPPHRQFRSIYFPTTRLLQQHRFRQMKSVVIVPATAAETARKRYPGESKGFVEEMRFVAMKLHTKDQAKEGEKEVTEPEEKAVTKWEPTVDGYLKFLVDSKVVYDTLEKIVQDATHPSYAEFRNTGLERSASLAKDLEWFKEQGYTIPQPSSPGLNYAQYLRDLSQNDPQAFICHFYNIYFAHSAGGRMIGKKIAGELLNNKGLEFYKWDGDLSQLLQNVRDKLNKVAEQWTREEKNHCLEETEKSFKWSGEILRLILS</sequence>
<protein>
    <recommendedName>
        <fullName evidence="5">Heme oxygenase 1, chloroplastic</fullName>
        <shortName evidence="5">LjHO1</shortName>
        <ecNumber evidence="4">1.14.14.18</ecNumber>
    </recommendedName>
</protein>
<gene>
    <name evidence="5" type="primary">HO1</name>
    <name evidence="5" type="ordered locus">Lj1g3v0672150</name>
</gene>
<proteinExistence type="evidence at protein level"/>
<feature type="transit peptide" description="Chloroplast" evidence="3">
    <location>
        <begin position="1"/>
        <end position="56"/>
    </location>
</feature>
<feature type="chain" id="PRO_0000460280" description="Heme oxygenase 1, chloroplastic" evidence="3">
    <location>
        <begin position="57"/>
        <end position="282"/>
    </location>
</feature>
<feature type="binding site" description="axial binding residue" evidence="1">
    <location>
        <position position="86"/>
    </location>
    <ligand>
        <name>heme b</name>
        <dbReference type="ChEBI" id="CHEBI:60344"/>
    </ligand>
    <ligandPart>
        <name>Fe</name>
        <dbReference type="ChEBI" id="CHEBI:18248"/>
    </ligandPart>
</feature>
<keyword id="KW-0150">Chloroplast</keyword>
<keyword id="KW-0349">Heme</keyword>
<keyword id="KW-0408">Iron</keyword>
<keyword id="KW-0479">Metal-binding</keyword>
<keyword id="KW-0536">Nodulation</keyword>
<keyword id="KW-0560">Oxidoreductase</keyword>
<keyword id="KW-0602">Photosynthesis</keyword>
<keyword id="KW-0934">Plastid</keyword>
<keyword id="KW-0346">Stress response</keyword>
<keyword id="KW-0809">Transit peptide</keyword>